<name>SOML1_SPAAU</name>
<protein>
    <recommendedName>
        <fullName>Somatolactin-1</fullName>
        <shortName>SL</shortName>
    </recommendedName>
</protein>
<organism>
    <name type="scientific">Sparus aurata</name>
    <name type="common">Gilthead sea bream</name>
    <dbReference type="NCBI Taxonomy" id="8175"/>
    <lineage>
        <taxon>Eukaryota</taxon>
        <taxon>Metazoa</taxon>
        <taxon>Chordata</taxon>
        <taxon>Craniata</taxon>
        <taxon>Vertebrata</taxon>
        <taxon>Euteleostomi</taxon>
        <taxon>Actinopterygii</taxon>
        <taxon>Neopterygii</taxon>
        <taxon>Teleostei</taxon>
        <taxon>Neoteleostei</taxon>
        <taxon>Acanthomorphata</taxon>
        <taxon>Eupercaria</taxon>
        <taxon>Spariformes</taxon>
        <taxon>Sparidae</taxon>
        <taxon>Sparus</taxon>
    </lineage>
</organism>
<keyword id="KW-1015">Disulfide bond</keyword>
<keyword id="KW-0325">Glycoprotein</keyword>
<keyword id="KW-0372">Hormone</keyword>
<keyword id="KW-1185">Reference proteome</keyword>
<keyword id="KW-0964">Secreted</keyword>
<keyword id="KW-0732">Signal</keyword>
<accession>P54863</accession>
<sequence>MRMIRAIKQGQWAVLLWPYLLTASIPLDCRDEQGVLSHCPSISQEKLLDRVIQHAELIYRVSEESCSLFEEMFIPFPLQLQRNQAGYPCITKALPIPSSKSEIQQISDKWLLHSVLMLVQSWIEPLVYLQTTLNRYDGVPDMLLNKTKWVSEKLMSLEQGVVVLIKKMLDEEMMTTTYSEQGLFQDDGQPEMLEYVMRDYTLLSCFKKDAHKMEILLKLLKCRQNDMHSCR</sequence>
<dbReference type="EMBL" id="L49205">
    <property type="protein sequence ID" value="AAA98734.1"/>
    <property type="molecule type" value="mRNA"/>
</dbReference>
<dbReference type="SMR" id="P54863"/>
<dbReference type="InParanoid" id="P54863"/>
<dbReference type="Proteomes" id="UP000472265">
    <property type="component" value="Unplaced"/>
</dbReference>
<dbReference type="GO" id="GO:0005615">
    <property type="term" value="C:extracellular space"/>
    <property type="evidence" value="ECO:0007669"/>
    <property type="project" value="TreeGrafter"/>
</dbReference>
<dbReference type="GO" id="GO:0070186">
    <property type="term" value="F:growth hormone activity"/>
    <property type="evidence" value="ECO:0007669"/>
    <property type="project" value="TreeGrafter"/>
</dbReference>
<dbReference type="GO" id="GO:0005131">
    <property type="term" value="F:growth hormone receptor binding"/>
    <property type="evidence" value="ECO:0007669"/>
    <property type="project" value="TreeGrafter"/>
</dbReference>
<dbReference type="GO" id="GO:0048513">
    <property type="term" value="P:animal organ development"/>
    <property type="evidence" value="ECO:0007669"/>
    <property type="project" value="TreeGrafter"/>
</dbReference>
<dbReference type="GO" id="GO:0060396">
    <property type="term" value="P:growth hormone receptor signaling pathway"/>
    <property type="evidence" value="ECO:0007669"/>
    <property type="project" value="TreeGrafter"/>
</dbReference>
<dbReference type="GO" id="GO:0045927">
    <property type="term" value="P:positive regulation of growth"/>
    <property type="evidence" value="ECO:0007669"/>
    <property type="project" value="TreeGrafter"/>
</dbReference>
<dbReference type="GO" id="GO:0046427">
    <property type="term" value="P:positive regulation of receptor signaling pathway via JAK-STAT"/>
    <property type="evidence" value="ECO:0007669"/>
    <property type="project" value="TreeGrafter"/>
</dbReference>
<dbReference type="GO" id="GO:0031667">
    <property type="term" value="P:response to nutrient levels"/>
    <property type="evidence" value="ECO:0007669"/>
    <property type="project" value="TreeGrafter"/>
</dbReference>
<dbReference type="FunFam" id="1.20.1250.10:FF:000042">
    <property type="entry name" value="Somatolactin alpha"/>
    <property type="match status" value="1"/>
</dbReference>
<dbReference type="Gene3D" id="1.20.1250.10">
    <property type="match status" value="1"/>
</dbReference>
<dbReference type="InterPro" id="IPR009079">
    <property type="entry name" value="4_helix_cytokine-like_core"/>
</dbReference>
<dbReference type="InterPro" id="IPR001400">
    <property type="entry name" value="Somatotropin/Prolactin"/>
</dbReference>
<dbReference type="InterPro" id="IPR018116">
    <property type="entry name" value="Somatotropin_CS"/>
</dbReference>
<dbReference type="PANTHER" id="PTHR11417:SF3">
    <property type="entry name" value="SOMATOLACTIN ALPHA ISOFORM X1-RELATED"/>
    <property type="match status" value="1"/>
</dbReference>
<dbReference type="PANTHER" id="PTHR11417">
    <property type="entry name" value="SOMATOTROPIN,PROLACTIN"/>
    <property type="match status" value="1"/>
</dbReference>
<dbReference type="Pfam" id="PF00103">
    <property type="entry name" value="Hormone_1"/>
    <property type="match status" value="1"/>
</dbReference>
<dbReference type="PRINTS" id="PR00836">
    <property type="entry name" value="SOMATOTROPIN"/>
</dbReference>
<dbReference type="SUPFAM" id="SSF47266">
    <property type="entry name" value="4-helical cytokines"/>
    <property type="match status" value="1"/>
</dbReference>
<dbReference type="PROSITE" id="PS00266">
    <property type="entry name" value="SOMATOTROPIN_1"/>
    <property type="match status" value="1"/>
</dbReference>
<dbReference type="PROSITE" id="PS00338">
    <property type="entry name" value="SOMATOTROPIN_2"/>
    <property type="match status" value="1"/>
</dbReference>
<feature type="signal peptide" evidence="2">
    <location>
        <begin position="1"/>
        <end position="24"/>
    </location>
</feature>
<feature type="chain" id="PRO_0000033077" description="Somatolactin-1">
    <location>
        <begin position="25"/>
        <end position="231"/>
    </location>
</feature>
<feature type="glycosylation site" description="N-linked (GlcNAc...) asparagine" evidence="2">
    <location>
        <position position="145"/>
    </location>
</feature>
<feature type="disulfide bond" evidence="1">
    <location>
        <begin position="29"/>
        <end position="39"/>
    </location>
</feature>
<feature type="disulfide bond" evidence="1">
    <location>
        <begin position="89"/>
        <end position="205"/>
    </location>
</feature>
<feature type="disulfide bond" evidence="1">
    <location>
        <begin position="222"/>
        <end position="230"/>
    </location>
</feature>
<evidence type="ECO:0000250" key="1"/>
<evidence type="ECO:0000255" key="2"/>
<evidence type="ECO:0000305" key="3"/>
<comment type="subcellular location">
    <subcellularLocation>
        <location>Secreted</location>
    </subcellularLocation>
</comment>
<comment type="tissue specificity">
    <text>Pituitary gland.</text>
</comment>
<comment type="similarity">
    <text evidence="3">Belongs to the somatotropin/prolactin family.</text>
</comment>
<reference key="1">
    <citation type="journal article" date="1996" name="Gen. Comp. Endocrinol.">
        <title>Cloning and expression of somatolactin, a pituitary hormone related to growth hormone and prolactin from gilthead seabream, Sparus aurata.</title>
        <authorList>
            <person name="Astola A."/>
            <person name="Pendon C."/>
            <person name="Ortiz M."/>
            <person name="Valdivia M.M."/>
        </authorList>
    </citation>
    <scope>NUCLEOTIDE SEQUENCE [MRNA]</scope>
    <source>
        <tissue>Pituitary</tissue>
    </source>
</reference>
<proteinExistence type="evidence at transcript level"/>